<protein>
    <recommendedName>
        <fullName>Ras-related protein ralB-B</fullName>
        <ecNumber evidence="9">3.6.5.2</ecNumber>
    </recommendedName>
    <alternativeName>
        <fullName>XRalB-B</fullName>
    </alternativeName>
</protein>
<proteinExistence type="evidence at transcript level"/>
<comment type="function">
    <text evidence="3 4 6">Multifunctional GTPase involved in a variety of cellular processes including gene expression, cell migration, cell proliferation, oncogenic transformation and membrane trafficking. Accomplishes its multiple functions by interacting with distinct downstream effectors. Acts as a GTP sensor for GTP-dependent exocytosis of dense core vesicles. Required both to stabilize the assembly of the exocyst complex and to localize functional exocyst complexes to the leading edge of migrating cells (By similarity). Required for suppression of apoptosis. In late stages of cytokinesis, upon completion of the bridge formation between dividing cells, mediates exocyst recruitment to the midbody to drive abscission (By similarity). Regulates the actin cytoskeleton to play a role in gastrulation or neurulation. During the cleavage stages, the GTP-bound form induces a cortical reaction that affects the localization of pigment granules. Activated by the FGF pathway via ras and ral-GDS, but independently of raf. Directs ralbp1 to the plasma membrane (By similarity). Involved in ligand-dependent receptor mediated endocytosis of the EGF and insulin receptors (By similarity).</text>
</comment>
<comment type="catalytic activity">
    <reaction evidence="9">
        <text>GTP + H2O = GDP + phosphate + H(+)</text>
        <dbReference type="Rhea" id="RHEA:19669"/>
        <dbReference type="ChEBI" id="CHEBI:15377"/>
        <dbReference type="ChEBI" id="CHEBI:15378"/>
        <dbReference type="ChEBI" id="CHEBI:37565"/>
        <dbReference type="ChEBI" id="CHEBI:43474"/>
        <dbReference type="ChEBI" id="CHEBI:58189"/>
        <dbReference type="EC" id="3.6.5.2"/>
    </reaction>
</comment>
<comment type="subunit">
    <text evidence="6">Interacts with ralbp1 and rap1gds1.</text>
</comment>
<comment type="subcellular location">
    <subcellularLocation>
        <location evidence="3">Cell membrane</location>
        <topology evidence="3">Lipid-anchor</topology>
        <orientation evidence="3">Cytoplasmic side</orientation>
    </subcellularLocation>
    <subcellularLocation>
        <location evidence="3">Midbody</location>
    </subcellularLocation>
    <text evidence="3">During late cytokinesis, enriched at the midbody.</text>
</comment>
<comment type="similarity">
    <text evidence="7">Belongs to the small GTPase superfamily. Ras family.</text>
</comment>
<name>RALBB_XENLA</name>
<evidence type="ECO:0000250" key="1"/>
<evidence type="ECO:0000250" key="2">
    <source>
        <dbReference type="UniProtKB" id="P01112"/>
    </source>
</evidence>
<evidence type="ECO:0000250" key="3">
    <source>
        <dbReference type="UniProtKB" id="P11234"/>
    </source>
</evidence>
<evidence type="ECO:0000250" key="4">
    <source>
        <dbReference type="UniProtKB" id="P36860"/>
    </source>
</evidence>
<evidence type="ECO:0000250" key="5">
    <source>
        <dbReference type="UniProtKB" id="P48555"/>
    </source>
</evidence>
<evidence type="ECO:0000250" key="6">
    <source>
        <dbReference type="UniProtKB" id="Q9YH09"/>
    </source>
</evidence>
<evidence type="ECO:0000255" key="7"/>
<evidence type="ECO:0000256" key="8">
    <source>
        <dbReference type="SAM" id="MobiDB-lite"/>
    </source>
</evidence>
<evidence type="ECO:0000305" key="9"/>
<evidence type="ECO:0000312" key="10">
    <source>
        <dbReference type="EMBL" id="AAH72046.1"/>
    </source>
</evidence>
<feature type="chain" id="PRO_0000228813" description="Ras-related protein ralB-B">
    <location>
        <begin position="1"/>
        <end position="203"/>
    </location>
</feature>
<feature type="propeptide" id="PRO_0000281355" description="Removed in mature form" evidence="1">
    <location>
        <begin position="204"/>
        <end position="206"/>
    </location>
</feature>
<feature type="region of interest" description="Disordered" evidence="8">
    <location>
        <begin position="180"/>
        <end position="206"/>
    </location>
</feature>
<feature type="short sequence motif" description="Effector region">
    <location>
        <begin position="43"/>
        <end position="51"/>
    </location>
</feature>
<feature type="compositionally biased region" description="Basic and acidic residues" evidence="8">
    <location>
        <begin position="180"/>
        <end position="189"/>
    </location>
</feature>
<feature type="compositionally biased region" description="Basic residues" evidence="8">
    <location>
        <begin position="190"/>
        <end position="200"/>
    </location>
</feature>
<feature type="binding site" evidence="2">
    <location>
        <begin position="21"/>
        <end position="28"/>
    </location>
    <ligand>
        <name>GTP</name>
        <dbReference type="ChEBI" id="CHEBI:37565"/>
    </ligand>
</feature>
<feature type="binding site" evidence="2">
    <location>
        <begin position="68"/>
        <end position="72"/>
    </location>
    <ligand>
        <name>GTP</name>
        <dbReference type="ChEBI" id="CHEBI:37565"/>
    </ligand>
</feature>
<feature type="binding site" evidence="2">
    <location>
        <begin position="128"/>
        <end position="131"/>
    </location>
    <ligand>
        <name>GTP</name>
        <dbReference type="ChEBI" id="CHEBI:37565"/>
    </ligand>
</feature>
<feature type="modified residue" description="Cysteine methyl ester" evidence="1">
    <location>
        <position position="203"/>
    </location>
</feature>
<feature type="lipid moiety-binding region" description="S-geranylgeranyl cysteine" evidence="5">
    <location>
        <position position="203"/>
    </location>
</feature>
<accession>Q6IP71</accession>
<dbReference type="EC" id="3.6.5.2" evidence="9"/>
<dbReference type="EMBL" id="BC072046">
    <property type="protein sequence ID" value="AAH72046.1"/>
    <property type="molecule type" value="mRNA"/>
</dbReference>
<dbReference type="RefSeq" id="NP_001085234.1">
    <property type="nucleotide sequence ID" value="NM_001091765.1"/>
</dbReference>
<dbReference type="SMR" id="Q6IP71"/>
<dbReference type="IntAct" id="Q6IP71">
    <property type="interactions" value="2"/>
</dbReference>
<dbReference type="DNASU" id="432329"/>
<dbReference type="GeneID" id="432329"/>
<dbReference type="KEGG" id="xla:432329"/>
<dbReference type="AGR" id="Xenbase:XB-GENE-6255413"/>
<dbReference type="CTD" id="432329"/>
<dbReference type="Xenbase" id="XB-GENE-6255413">
    <property type="gene designation" value="ralb.S"/>
</dbReference>
<dbReference type="OMA" id="DDTIPFI"/>
<dbReference type="OrthoDB" id="5976022at2759"/>
<dbReference type="Proteomes" id="UP000186698">
    <property type="component" value="Chromosome 9_10S"/>
</dbReference>
<dbReference type="Bgee" id="432329">
    <property type="expression patterns" value="Expressed in internal ear and 19 other cell types or tissues"/>
</dbReference>
<dbReference type="GO" id="GO:0030496">
    <property type="term" value="C:midbody"/>
    <property type="evidence" value="ECO:0007669"/>
    <property type="project" value="UniProtKB-SubCell"/>
</dbReference>
<dbReference type="GO" id="GO:0005886">
    <property type="term" value="C:plasma membrane"/>
    <property type="evidence" value="ECO:0000318"/>
    <property type="project" value="GO_Central"/>
</dbReference>
<dbReference type="GO" id="GO:0003925">
    <property type="term" value="F:G protein activity"/>
    <property type="evidence" value="ECO:0007669"/>
    <property type="project" value="UniProtKB-EC"/>
</dbReference>
<dbReference type="GO" id="GO:0019003">
    <property type="term" value="F:GDP binding"/>
    <property type="evidence" value="ECO:0000318"/>
    <property type="project" value="GO_Central"/>
</dbReference>
<dbReference type="GO" id="GO:0005525">
    <property type="term" value="F:GTP binding"/>
    <property type="evidence" value="ECO:0000318"/>
    <property type="project" value="GO_Central"/>
</dbReference>
<dbReference type="GO" id="GO:0003924">
    <property type="term" value="F:GTPase activity"/>
    <property type="evidence" value="ECO:0000318"/>
    <property type="project" value="GO_Central"/>
</dbReference>
<dbReference type="GO" id="GO:0030036">
    <property type="term" value="P:actin cytoskeleton organization"/>
    <property type="evidence" value="ECO:0000250"/>
    <property type="project" value="UniProtKB"/>
</dbReference>
<dbReference type="GO" id="GO:0008543">
    <property type="term" value="P:fibroblast growth factor receptor signaling pathway"/>
    <property type="evidence" value="ECO:0000250"/>
    <property type="project" value="UniProtKB"/>
</dbReference>
<dbReference type="GO" id="GO:0007265">
    <property type="term" value="P:Ras protein signal transduction"/>
    <property type="evidence" value="ECO:0000250"/>
    <property type="project" value="UniProtKB"/>
</dbReference>
<dbReference type="GO" id="GO:0048070">
    <property type="term" value="P:regulation of developmental pigmentation"/>
    <property type="evidence" value="ECO:0000250"/>
    <property type="project" value="UniProtKB"/>
</dbReference>
<dbReference type="GO" id="GO:0007264">
    <property type="term" value="P:small GTPase-mediated signal transduction"/>
    <property type="evidence" value="ECO:0000250"/>
    <property type="project" value="UniProtKB"/>
</dbReference>
<dbReference type="CDD" id="cd04139">
    <property type="entry name" value="RalA_RalB"/>
    <property type="match status" value="1"/>
</dbReference>
<dbReference type="FunFam" id="3.40.50.300:FF:000203">
    <property type="entry name" value="Putative ras-related protein ral-a"/>
    <property type="match status" value="1"/>
</dbReference>
<dbReference type="Gene3D" id="3.40.50.300">
    <property type="entry name" value="P-loop containing nucleotide triphosphate hydrolases"/>
    <property type="match status" value="1"/>
</dbReference>
<dbReference type="InterPro" id="IPR027417">
    <property type="entry name" value="P-loop_NTPase"/>
</dbReference>
<dbReference type="InterPro" id="IPR005225">
    <property type="entry name" value="Small_GTP-bd"/>
</dbReference>
<dbReference type="InterPro" id="IPR001806">
    <property type="entry name" value="Small_GTPase"/>
</dbReference>
<dbReference type="InterPro" id="IPR020849">
    <property type="entry name" value="Small_GTPase_Ras-type"/>
</dbReference>
<dbReference type="NCBIfam" id="TIGR00231">
    <property type="entry name" value="small_GTP"/>
    <property type="match status" value="1"/>
</dbReference>
<dbReference type="PANTHER" id="PTHR24070">
    <property type="entry name" value="RAS, DI-RAS, AND RHEB FAMILY MEMBERS OF SMALL GTPASE SUPERFAMILY"/>
    <property type="match status" value="1"/>
</dbReference>
<dbReference type="Pfam" id="PF00071">
    <property type="entry name" value="Ras"/>
    <property type="match status" value="1"/>
</dbReference>
<dbReference type="PRINTS" id="PR00449">
    <property type="entry name" value="RASTRNSFRMNG"/>
</dbReference>
<dbReference type="SMART" id="SM00175">
    <property type="entry name" value="RAB"/>
    <property type="match status" value="1"/>
</dbReference>
<dbReference type="SMART" id="SM00176">
    <property type="entry name" value="RAN"/>
    <property type="match status" value="1"/>
</dbReference>
<dbReference type="SMART" id="SM00173">
    <property type="entry name" value="RAS"/>
    <property type="match status" value="1"/>
</dbReference>
<dbReference type="SMART" id="SM00174">
    <property type="entry name" value="RHO"/>
    <property type="match status" value="1"/>
</dbReference>
<dbReference type="SUPFAM" id="SSF52540">
    <property type="entry name" value="P-loop containing nucleoside triphosphate hydrolases"/>
    <property type="match status" value="1"/>
</dbReference>
<dbReference type="PROSITE" id="PS51421">
    <property type="entry name" value="RAS"/>
    <property type="match status" value="1"/>
</dbReference>
<gene>
    <name type="primary">ralb-b</name>
</gene>
<reference evidence="10" key="1">
    <citation type="submission" date="2004-06" db="EMBL/GenBank/DDBJ databases">
        <authorList>
            <consortium name="NIH - Xenopus Gene Collection (XGC) project"/>
        </authorList>
    </citation>
    <scope>NUCLEOTIDE SEQUENCE [LARGE SCALE MRNA]</scope>
    <source>
        <tissue evidence="10">Spleen</tissue>
    </source>
</reference>
<sequence length="206" mass="23393">MAANKNKNQSSLVLHKVIMVGSGGVGKSALTLQFMYDEFVEDYEPTKADSYRKKVVLDGEEVQIDILDTAGQEDYAAIRDNYFRSGEGFLLVFSITEHESFTATAEFREQILRVKAEEDKIPLLVVGNKSDLEDRRQVPMDEARGKAEEWGVQYVETSAKTRANVDKVFFDLMREVRTKKMSENKDKNGKKSGKSKKGFKQRCCLL</sequence>
<organism>
    <name type="scientific">Xenopus laevis</name>
    <name type="common">African clawed frog</name>
    <dbReference type="NCBI Taxonomy" id="8355"/>
    <lineage>
        <taxon>Eukaryota</taxon>
        <taxon>Metazoa</taxon>
        <taxon>Chordata</taxon>
        <taxon>Craniata</taxon>
        <taxon>Vertebrata</taxon>
        <taxon>Euteleostomi</taxon>
        <taxon>Amphibia</taxon>
        <taxon>Batrachia</taxon>
        <taxon>Anura</taxon>
        <taxon>Pipoidea</taxon>
        <taxon>Pipidae</taxon>
        <taxon>Xenopodinae</taxon>
        <taxon>Xenopus</taxon>
        <taxon>Xenopus</taxon>
    </lineage>
</organism>
<keyword id="KW-1003">Cell membrane</keyword>
<keyword id="KW-0342">GTP-binding</keyword>
<keyword id="KW-0378">Hydrolase</keyword>
<keyword id="KW-0449">Lipoprotein</keyword>
<keyword id="KW-0472">Membrane</keyword>
<keyword id="KW-0488">Methylation</keyword>
<keyword id="KW-0547">Nucleotide-binding</keyword>
<keyword id="KW-0636">Prenylation</keyword>
<keyword id="KW-1185">Reference proteome</keyword>